<proteinExistence type="evidence at protein level"/>
<protein>
    <recommendedName>
        <fullName>Immunity protein YxxD</fullName>
    </recommendedName>
    <alternativeName>
        <fullName>ORF1</fullName>
    </alternativeName>
</protein>
<feature type="chain" id="PRO_0000050043" description="Immunity protein YxxD">
    <location>
        <begin position="1"/>
        <end position="147"/>
    </location>
</feature>
<dbReference type="EMBL" id="D29985">
    <property type="protein sequence ID" value="BAA06254.1"/>
    <property type="molecule type" value="Genomic_DNA"/>
</dbReference>
<dbReference type="EMBL" id="D31856">
    <property type="protein sequence ID" value="BAA06650.1"/>
    <property type="molecule type" value="Genomic_DNA"/>
</dbReference>
<dbReference type="EMBL" id="X85408">
    <property type="protein sequence ID" value="CAA59695.1"/>
    <property type="molecule type" value="Genomic_DNA"/>
</dbReference>
<dbReference type="EMBL" id="AL009126">
    <property type="protein sequence ID" value="CAB15965.1"/>
    <property type="molecule type" value="Genomic_DNA"/>
</dbReference>
<dbReference type="EMBL" id="Z34526">
    <property type="protein sequence ID" value="CAA84284.1"/>
    <property type="molecule type" value="Genomic_DNA"/>
</dbReference>
<dbReference type="PIR" id="S65579">
    <property type="entry name" value="S65579"/>
</dbReference>
<dbReference type="RefSeq" id="WP_003244256.1">
    <property type="nucleotide sequence ID" value="NZ_OZ025638.1"/>
</dbReference>
<dbReference type="SMR" id="P40737"/>
<dbReference type="FunCoup" id="P40737">
    <property type="interactions" value="3"/>
</dbReference>
<dbReference type="STRING" id="224308.BSU39290"/>
<dbReference type="PaxDb" id="224308-BSU39290"/>
<dbReference type="EnsemblBacteria" id="CAB15965">
    <property type="protein sequence ID" value="CAB15965"/>
    <property type="gene ID" value="BSU_39290"/>
</dbReference>
<dbReference type="GeneID" id="937530"/>
<dbReference type="KEGG" id="bsu:BSU39290"/>
<dbReference type="PATRIC" id="fig|224308.179.peg.4253"/>
<dbReference type="eggNOG" id="ENOG5031IMN">
    <property type="taxonomic scope" value="Bacteria"/>
</dbReference>
<dbReference type="InParanoid" id="P40737"/>
<dbReference type="OrthoDB" id="2635342at2"/>
<dbReference type="BioCyc" id="BSUB:BSU39290-MONOMER"/>
<dbReference type="Proteomes" id="UP000001570">
    <property type="component" value="Chromosome"/>
</dbReference>
<dbReference type="GO" id="GO:0005737">
    <property type="term" value="C:cytoplasm"/>
    <property type="evidence" value="ECO:0007669"/>
    <property type="project" value="UniProtKB-SubCell"/>
</dbReference>
<dbReference type="Gene3D" id="3.40.1580.10">
    <property type="entry name" value="SMI1/KNR4-like"/>
    <property type="match status" value="1"/>
</dbReference>
<dbReference type="InterPro" id="IPR018958">
    <property type="entry name" value="Knr4/Smi1-like_dom"/>
</dbReference>
<dbReference type="InterPro" id="IPR037883">
    <property type="entry name" value="Knr4/Smi1-like_sf"/>
</dbReference>
<dbReference type="Pfam" id="PF14568">
    <property type="entry name" value="SUKH_6"/>
    <property type="match status" value="1"/>
</dbReference>
<dbReference type="SMART" id="SM00860">
    <property type="entry name" value="SMI1_KNR4"/>
    <property type="match status" value="1"/>
</dbReference>
<dbReference type="SUPFAM" id="SSF160631">
    <property type="entry name" value="SMI1/KNR4-like"/>
    <property type="match status" value="1"/>
</dbReference>
<evidence type="ECO:0000269" key="1">
    <source>
    </source>
</evidence>
<evidence type="ECO:0000269" key="2">
    <source>
    </source>
</evidence>
<evidence type="ECO:0000305" key="3"/>
<organism>
    <name type="scientific">Bacillus subtilis (strain 168)</name>
    <dbReference type="NCBI Taxonomy" id="224308"/>
    <lineage>
        <taxon>Bacteria</taxon>
        <taxon>Bacillati</taxon>
        <taxon>Bacillota</taxon>
        <taxon>Bacilli</taxon>
        <taxon>Bacillales</taxon>
        <taxon>Bacillaceae</taxon>
        <taxon>Bacillus</taxon>
    </lineage>
</organism>
<sequence>MSYNFIKSNKENDFYPVNQSEIEEVEKNLNLKLPSELVNFYLEVGYGFIKGSEFNTNRILDPYSVRDFRLRINDFEFYPDIEIYDEFENDKLIFFEGSESALMSIELNDNNKNPIYYYDIQIATSLTEFLRKIEENDQYYLDLLDDE</sequence>
<comment type="function">
    <text evidence="1 2">Immunity component of one of 6 LXG toxin-immunity modules in this strain. They promote kin selection, mediate competition in biofilms, and drive spatial segregation of different strains, indicating that LXG toxins may help avoid warfare between strains in biofilms. Mediates intercellular competition during biofilm formation; disruption of the operon disadvantages the bacteria, but overexpression of the cognate immunity protein restores growth in competition with wild-type. In situ neutralizes the toxic effect of cognate toxin YxiD (PubMed:34280190). Neutralizes the toxic activity of cognate toxin YxiD upon expression in E.coli. Does not have immunity protein activity on other LXG toxins (PubMed:22200572).</text>
</comment>
<comment type="subunit">
    <text evidence="3">Probably interacts with cognate toxin YxiD but not with other non-cognate toxins. The interaction inhibits the toxic activity of YxiD (Probable).</text>
</comment>
<comment type="subcellular location">
    <subcellularLocation>
        <location evidence="3">Cytoplasm</location>
    </subcellularLocation>
</comment>
<comment type="induction">
    <text evidence="2">Expressed on rich and minimal solid media likely in early stationary phase; dependent on DegSU. Not expressed in liquid LB, but only under conditions that promote biofilm formation.</text>
</comment>
<comment type="disruption phenotype">
    <text evidence="2">Deletion of the yxiB-yxiC-yxiD-yxxD-yxxE operon has no visible growth phenotype, however it is out-competed by wild-type cells.</text>
</comment>
<accession>P40737</accession>
<name>YXXD_BACSU</name>
<gene>
    <name type="primary">yxxD</name>
    <name type="ordered locus">BSU39290</name>
    <name type="ORF">N17A</name>
</gene>
<keyword id="KW-0963">Cytoplasm</keyword>
<keyword id="KW-1185">Reference proteome</keyword>
<reference key="1">
    <citation type="journal article" date="1995" name="Microbiology">
        <title>Cloning and sequencing of a 29 kb region of the Bacillus subtilis genome containing the hut and wapA loci.</title>
        <authorList>
            <person name="Yoshida K."/>
            <person name="Sano H."/>
            <person name="Seki S."/>
            <person name="Oda M."/>
            <person name="Fujimura M."/>
            <person name="Fujita Y."/>
        </authorList>
    </citation>
    <scope>NUCLEOTIDE SEQUENCE [GENOMIC DNA]</scope>
    <source>
        <strain>168 / BGSC1A1</strain>
    </source>
</reference>
<reference key="2">
    <citation type="journal article" date="1996" name="Mol. Gen. Genet.">
        <title>Suppression of the Bgl+ phenotype of a delta hns strain of Escherichia coli by a Bacillus subtilis antiterminator binding site.</title>
        <authorList>
            <person name="Beloin C."/>
            <person name="Hirschbein L."/>
            <person name="Le Hegarat F."/>
        </authorList>
    </citation>
    <scope>NUCLEOTIDE SEQUENCE [GENOMIC DNA]</scope>
    <source>
        <strain>168</strain>
    </source>
</reference>
<reference key="3">
    <citation type="journal article" date="1997" name="Nature">
        <title>The complete genome sequence of the Gram-positive bacterium Bacillus subtilis.</title>
        <authorList>
            <person name="Kunst F."/>
            <person name="Ogasawara N."/>
            <person name="Moszer I."/>
            <person name="Albertini A.M."/>
            <person name="Alloni G."/>
            <person name="Azevedo V."/>
            <person name="Bertero M.G."/>
            <person name="Bessieres P."/>
            <person name="Bolotin A."/>
            <person name="Borchert S."/>
            <person name="Borriss R."/>
            <person name="Boursier L."/>
            <person name="Brans A."/>
            <person name="Braun M."/>
            <person name="Brignell S.C."/>
            <person name="Bron S."/>
            <person name="Brouillet S."/>
            <person name="Bruschi C.V."/>
            <person name="Caldwell B."/>
            <person name="Capuano V."/>
            <person name="Carter N.M."/>
            <person name="Choi S.-K."/>
            <person name="Codani J.-J."/>
            <person name="Connerton I.F."/>
            <person name="Cummings N.J."/>
            <person name="Daniel R.A."/>
            <person name="Denizot F."/>
            <person name="Devine K.M."/>
            <person name="Duesterhoeft A."/>
            <person name="Ehrlich S.D."/>
            <person name="Emmerson P.T."/>
            <person name="Entian K.-D."/>
            <person name="Errington J."/>
            <person name="Fabret C."/>
            <person name="Ferrari E."/>
            <person name="Foulger D."/>
            <person name="Fritz C."/>
            <person name="Fujita M."/>
            <person name="Fujita Y."/>
            <person name="Fuma S."/>
            <person name="Galizzi A."/>
            <person name="Galleron N."/>
            <person name="Ghim S.-Y."/>
            <person name="Glaser P."/>
            <person name="Goffeau A."/>
            <person name="Golightly E.J."/>
            <person name="Grandi G."/>
            <person name="Guiseppi G."/>
            <person name="Guy B.J."/>
            <person name="Haga K."/>
            <person name="Haiech J."/>
            <person name="Harwood C.R."/>
            <person name="Henaut A."/>
            <person name="Hilbert H."/>
            <person name="Holsappel S."/>
            <person name="Hosono S."/>
            <person name="Hullo M.-F."/>
            <person name="Itaya M."/>
            <person name="Jones L.-M."/>
            <person name="Joris B."/>
            <person name="Karamata D."/>
            <person name="Kasahara Y."/>
            <person name="Klaerr-Blanchard M."/>
            <person name="Klein C."/>
            <person name="Kobayashi Y."/>
            <person name="Koetter P."/>
            <person name="Koningstein G."/>
            <person name="Krogh S."/>
            <person name="Kumano M."/>
            <person name="Kurita K."/>
            <person name="Lapidus A."/>
            <person name="Lardinois S."/>
            <person name="Lauber J."/>
            <person name="Lazarevic V."/>
            <person name="Lee S.-M."/>
            <person name="Levine A."/>
            <person name="Liu H."/>
            <person name="Masuda S."/>
            <person name="Mauel C."/>
            <person name="Medigue C."/>
            <person name="Medina N."/>
            <person name="Mellado R.P."/>
            <person name="Mizuno M."/>
            <person name="Moestl D."/>
            <person name="Nakai S."/>
            <person name="Noback M."/>
            <person name="Noone D."/>
            <person name="O'Reilly M."/>
            <person name="Ogawa K."/>
            <person name="Ogiwara A."/>
            <person name="Oudega B."/>
            <person name="Park S.-H."/>
            <person name="Parro V."/>
            <person name="Pohl T.M."/>
            <person name="Portetelle D."/>
            <person name="Porwollik S."/>
            <person name="Prescott A.M."/>
            <person name="Presecan E."/>
            <person name="Pujic P."/>
            <person name="Purnelle B."/>
            <person name="Rapoport G."/>
            <person name="Rey M."/>
            <person name="Reynolds S."/>
            <person name="Rieger M."/>
            <person name="Rivolta C."/>
            <person name="Rocha E."/>
            <person name="Roche B."/>
            <person name="Rose M."/>
            <person name="Sadaie Y."/>
            <person name="Sato T."/>
            <person name="Scanlan E."/>
            <person name="Schleich S."/>
            <person name="Schroeter R."/>
            <person name="Scoffone F."/>
            <person name="Sekiguchi J."/>
            <person name="Sekowska A."/>
            <person name="Seror S.J."/>
            <person name="Serror P."/>
            <person name="Shin B.-S."/>
            <person name="Soldo B."/>
            <person name="Sorokin A."/>
            <person name="Tacconi E."/>
            <person name="Takagi T."/>
            <person name="Takahashi H."/>
            <person name="Takemaru K."/>
            <person name="Takeuchi M."/>
            <person name="Tamakoshi A."/>
            <person name="Tanaka T."/>
            <person name="Terpstra P."/>
            <person name="Tognoni A."/>
            <person name="Tosato V."/>
            <person name="Uchiyama S."/>
            <person name="Vandenbol M."/>
            <person name="Vannier F."/>
            <person name="Vassarotti A."/>
            <person name="Viari A."/>
            <person name="Wambutt R."/>
            <person name="Wedler E."/>
            <person name="Wedler H."/>
            <person name="Weitzenegger T."/>
            <person name="Winters P."/>
            <person name="Wipat A."/>
            <person name="Yamamoto H."/>
            <person name="Yamane K."/>
            <person name="Yasumoto K."/>
            <person name="Yata K."/>
            <person name="Yoshida K."/>
            <person name="Yoshikawa H.-F."/>
            <person name="Zumstein E."/>
            <person name="Yoshikawa H."/>
            <person name="Danchin A."/>
        </authorList>
    </citation>
    <scope>NUCLEOTIDE SEQUENCE [LARGE SCALE GENOMIC DNA]</scope>
    <source>
        <strain>168</strain>
    </source>
</reference>
<reference key="4">
    <citation type="journal article" date="1995" name="J. Bacteriol.">
        <title>New beta-glucoside (bgl) genes in Bacillus subtilis: the bglP gene product has both transport and regulatory functions similar to those of BglF, its Escherichia coli homolog.</title>
        <authorList>
            <person name="Le Coq D."/>
            <person name="Lindner C."/>
            <person name="Krueger S."/>
            <person name="Steinmetz M."/>
            <person name="Stuelke J."/>
        </authorList>
    </citation>
    <scope>NUCLEOTIDE SEQUENCE [GENOMIC DNA] OF 61-147</scope>
    <source>
        <strain>168 / Marburg / ATCC 6051 / DSM 10 / JCM 1465 / NBRC 13719 / NCIMB 3610 / NRRL NRS-744 / VKM B-501</strain>
    </source>
</reference>
<reference key="5">
    <citation type="journal article" date="2012" name="FEBS Lett.">
        <title>A novel family of toxin/antitoxin proteins in Bacillus species.</title>
        <authorList>
            <person name="Holberger L.E."/>
            <person name="Garza-Sanchez F."/>
            <person name="Lamoureux J."/>
            <person name="Low D.A."/>
            <person name="Hayes C.S."/>
        </authorList>
    </citation>
    <scope>FUNCTION AS AN IMMUNITY PROTEIN</scope>
    <scope>EXPRESSION IN E.COLI</scope>
    <source>
        <strain>168</strain>
    </source>
</reference>
<reference key="6">
    <citation type="journal article" date="2021" name="PLoS Genet.">
        <title>Diverse LXG toxin and antitoxin systems specifically mediate intraspecies competition in Bacillus subtilis biofilms.</title>
        <authorList>
            <person name="Kobayashi K."/>
        </authorList>
    </citation>
    <scope>FUNCTION AS AN IMMUNITY PROTEIN</scope>
    <scope>INDUCTION</scope>
    <scope>DISRUPTION PHENOTYPE</scope>
    <source>
        <strain>168 / Marburg / ATCC 6051 / DSM 10 / JCM 1465 / NBRC 13719 / NCIMB 3610 / NRRL NRS-744 / VKM B-501</strain>
    </source>
</reference>